<organism>
    <name type="scientific">Bacillus cereus (strain Q1)</name>
    <dbReference type="NCBI Taxonomy" id="361100"/>
    <lineage>
        <taxon>Bacteria</taxon>
        <taxon>Bacillati</taxon>
        <taxon>Bacillota</taxon>
        <taxon>Bacilli</taxon>
        <taxon>Bacillales</taxon>
        <taxon>Bacillaceae</taxon>
        <taxon>Bacillus</taxon>
        <taxon>Bacillus cereus group</taxon>
    </lineage>
</organism>
<protein>
    <recommendedName>
        <fullName evidence="1">4-hydroxy-3-methylbut-2-enyl diphosphate reductase</fullName>
        <shortName evidence="1">HMBPP reductase</shortName>
        <ecNumber evidence="1">1.17.7.4</ecNumber>
    </recommendedName>
</protein>
<comment type="function">
    <text evidence="1">Catalyzes the conversion of 1-hydroxy-2-methyl-2-(E)-butenyl 4-diphosphate (HMBPP) into a mixture of isopentenyl diphosphate (IPP) and dimethylallyl diphosphate (DMAPP). Acts in the terminal step of the DOXP/MEP pathway for isoprenoid precursor biosynthesis.</text>
</comment>
<comment type="catalytic activity">
    <reaction evidence="1">
        <text>isopentenyl diphosphate + 2 oxidized [2Fe-2S]-[ferredoxin] + H2O = (2E)-4-hydroxy-3-methylbut-2-enyl diphosphate + 2 reduced [2Fe-2S]-[ferredoxin] + 2 H(+)</text>
        <dbReference type="Rhea" id="RHEA:24488"/>
        <dbReference type="Rhea" id="RHEA-COMP:10000"/>
        <dbReference type="Rhea" id="RHEA-COMP:10001"/>
        <dbReference type="ChEBI" id="CHEBI:15377"/>
        <dbReference type="ChEBI" id="CHEBI:15378"/>
        <dbReference type="ChEBI" id="CHEBI:33737"/>
        <dbReference type="ChEBI" id="CHEBI:33738"/>
        <dbReference type="ChEBI" id="CHEBI:128753"/>
        <dbReference type="ChEBI" id="CHEBI:128769"/>
        <dbReference type="EC" id="1.17.7.4"/>
    </reaction>
</comment>
<comment type="catalytic activity">
    <reaction evidence="1">
        <text>dimethylallyl diphosphate + 2 oxidized [2Fe-2S]-[ferredoxin] + H2O = (2E)-4-hydroxy-3-methylbut-2-enyl diphosphate + 2 reduced [2Fe-2S]-[ferredoxin] + 2 H(+)</text>
        <dbReference type="Rhea" id="RHEA:24825"/>
        <dbReference type="Rhea" id="RHEA-COMP:10000"/>
        <dbReference type="Rhea" id="RHEA-COMP:10001"/>
        <dbReference type="ChEBI" id="CHEBI:15377"/>
        <dbReference type="ChEBI" id="CHEBI:15378"/>
        <dbReference type="ChEBI" id="CHEBI:33737"/>
        <dbReference type="ChEBI" id="CHEBI:33738"/>
        <dbReference type="ChEBI" id="CHEBI:57623"/>
        <dbReference type="ChEBI" id="CHEBI:128753"/>
        <dbReference type="EC" id="1.17.7.4"/>
    </reaction>
</comment>
<comment type="cofactor">
    <cofactor evidence="1">
        <name>[4Fe-4S] cluster</name>
        <dbReference type="ChEBI" id="CHEBI:49883"/>
    </cofactor>
    <text evidence="1">Binds 1 [4Fe-4S] cluster per subunit.</text>
</comment>
<comment type="pathway">
    <text evidence="1">Isoprenoid biosynthesis; dimethylallyl diphosphate biosynthesis; dimethylallyl diphosphate from (2E)-4-hydroxy-3-methylbutenyl diphosphate: step 1/1.</text>
</comment>
<comment type="pathway">
    <text evidence="1">Isoprenoid biosynthesis; isopentenyl diphosphate biosynthesis via DXP pathway; isopentenyl diphosphate from 1-deoxy-D-xylulose 5-phosphate: step 6/6.</text>
</comment>
<comment type="similarity">
    <text evidence="1">Belongs to the IspH family.</text>
</comment>
<gene>
    <name evidence="1" type="primary">ispH</name>
    <name type="ordered locus">BCQ_4075</name>
</gene>
<evidence type="ECO:0000255" key="1">
    <source>
        <dbReference type="HAMAP-Rule" id="MF_00191"/>
    </source>
</evidence>
<proteinExistence type="inferred from homology"/>
<keyword id="KW-0004">4Fe-4S</keyword>
<keyword id="KW-0408">Iron</keyword>
<keyword id="KW-0411">Iron-sulfur</keyword>
<keyword id="KW-0414">Isoprene biosynthesis</keyword>
<keyword id="KW-0479">Metal-binding</keyword>
<keyword id="KW-0560">Oxidoreductase</keyword>
<name>ISPH_BACCQ</name>
<accession>B9IY56</accession>
<dbReference type="EC" id="1.17.7.4" evidence="1"/>
<dbReference type="EMBL" id="CP000227">
    <property type="protein sequence ID" value="ACM14502.1"/>
    <property type="molecule type" value="Genomic_DNA"/>
</dbReference>
<dbReference type="SMR" id="B9IY56"/>
<dbReference type="KEGG" id="bcq:BCQ_4075"/>
<dbReference type="HOGENOM" id="CLU_027486_0_0_9"/>
<dbReference type="UniPathway" id="UPA00056">
    <property type="reaction ID" value="UER00097"/>
</dbReference>
<dbReference type="UniPathway" id="UPA00059">
    <property type="reaction ID" value="UER00105"/>
</dbReference>
<dbReference type="Proteomes" id="UP000000441">
    <property type="component" value="Chromosome"/>
</dbReference>
<dbReference type="GO" id="GO:0051539">
    <property type="term" value="F:4 iron, 4 sulfur cluster binding"/>
    <property type="evidence" value="ECO:0007669"/>
    <property type="project" value="UniProtKB-UniRule"/>
</dbReference>
<dbReference type="GO" id="GO:0051745">
    <property type="term" value="F:4-hydroxy-3-methylbut-2-enyl diphosphate reductase activity"/>
    <property type="evidence" value="ECO:0007669"/>
    <property type="project" value="UniProtKB-UniRule"/>
</dbReference>
<dbReference type="GO" id="GO:0046872">
    <property type="term" value="F:metal ion binding"/>
    <property type="evidence" value="ECO:0007669"/>
    <property type="project" value="UniProtKB-KW"/>
</dbReference>
<dbReference type="GO" id="GO:0050992">
    <property type="term" value="P:dimethylallyl diphosphate biosynthetic process"/>
    <property type="evidence" value="ECO:0007669"/>
    <property type="project" value="UniProtKB-UniRule"/>
</dbReference>
<dbReference type="GO" id="GO:0019288">
    <property type="term" value="P:isopentenyl diphosphate biosynthetic process, methylerythritol 4-phosphate pathway"/>
    <property type="evidence" value="ECO:0007669"/>
    <property type="project" value="UniProtKB-UniRule"/>
</dbReference>
<dbReference type="GO" id="GO:0016114">
    <property type="term" value="P:terpenoid biosynthetic process"/>
    <property type="evidence" value="ECO:0007669"/>
    <property type="project" value="UniProtKB-UniRule"/>
</dbReference>
<dbReference type="CDD" id="cd13944">
    <property type="entry name" value="lytB_ispH"/>
    <property type="match status" value="1"/>
</dbReference>
<dbReference type="Gene3D" id="3.40.50.11270">
    <property type="match status" value="1"/>
</dbReference>
<dbReference type="Gene3D" id="3.40.1010.20">
    <property type="entry name" value="4-hydroxy-3-methylbut-2-enyl diphosphate reductase, catalytic domain"/>
    <property type="match status" value="2"/>
</dbReference>
<dbReference type="HAMAP" id="MF_00191">
    <property type="entry name" value="IspH"/>
    <property type="match status" value="1"/>
</dbReference>
<dbReference type="InterPro" id="IPR003451">
    <property type="entry name" value="LytB/IspH"/>
</dbReference>
<dbReference type="NCBIfam" id="TIGR00216">
    <property type="entry name" value="ispH_lytB"/>
    <property type="match status" value="1"/>
</dbReference>
<dbReference type="NCBIfam" id="NF002187">
    <property type="entry name" value="PRK01045.1-1"/>
    <property type="match status" value="1"/>
</dbReference>
<dbReference type="PANTHER" id="PTHR30426">
    <property type="entry name" value="4-HYDROXY-3-METHYLBUT-2-ENYL DIPHOSPHATE REDUCTASE"/>
    <property type="match status" value="1"/>
</dbReference>
<dbReference type="PANTHER" id="PTHR30426:SF0">
    <property type="entry name" value="4-HYDROXY-3-METHYLBUT-2-ENYL DIPHOSPHATE REDUCTASE"/>
    <property type="match status" value="1"/>
</dbReference>
<dbReference type="Pfam" id="PF02401">
    <property type="entry name" value="LYTB"/>
    <property type="match status" value="1"/>
</dbReference>
<reference key="1">
    <citation type="journal article" date="2009" name="J. Bacteriol.">
        <title>Complete genome sequence of the extremophilic Bacillus cereus strain Q1 with industrial applications.</title>
        <authorList>
            <person name="Xiong Z."/>
            <person name="Jiang Y."/>
            <person name="Qi D."/>
            <person name="Lu H."/>
            <person name="Yang F."/>
            <person name="Yang J."/>
            <person name="Chen L."/>
            <person name="Sun L."/>
            <person name="Xu X."/>
            <person name="Xue Y."/>
            <person name="Zhu Y."/>
            <person name="Jin Q."/>
        </authorList>
    </citation>
    <scope>NUCLEOTIDE SEQUENCE [LARGE SCALE GENOMIC DNA]</scope>
    <source>
        <strain>Q1</strain>
    </source>
</reference>
<feature type="chain" id="PRO_1000124276" description="4-hydroxy-3-methylbut-2-enyl diphosphate reductase">
    <location>
        <begin position="1"/>
        <end position="316"/>
    </location>
</feature>
<feature type="active site" description="Proton donor" evidence="1">
    <location>
        <position position="133"/>
    </location>
</feature>
<feature type="binding site" evidence="1">
    <location>
        <position position="12"/>
    </location>
    <ligand>
        <name>[4Fe-4S] cluster</name>
        <dbReference type="ChEBI" id="CHEBI:49883"/>
    </ligand>
</feature>
<feature type="binding site" evidence="1">
    <location>
        <position position="43"/>
    </location>
    <ligand>
        <name>(2E)-4-hydroxy-3-methylbut-2-enyl diphosphate</name>
        <dbReference type="ChEBI" id="CHEBI:128753"/>
    </ligand>
</feature>
<feature type="binding site" evidence="1">
    <location>
        <position position="43"/>
    </location>
    <ligand>
        <name>dimethylallyl diphosphate</name>
        <dbReference type="ChEBI" id="CHEBI:57623"/>
    </ligand>
</feature>
<feature type="binding site" evidence="1">
    <location>
        <position position="43"/>
    </location>
    <ligand>
        <name>isopentenyl diphosphate</name>
        <dbReference type="ChEBI" id="CHEBI:128769"/>
    </ligand>
</feature>
<feature type="binding site" evidence="1">
    <location>
        <position position="81"/>
    </location>
    <ligand>
        <name>(2E)-4-hydroxy-3-methylbut-2-enyl diphosphate</name>
        <dbReference type="ChEBI" id="CHEBI:128753"/>
    </ligand>
</feature>
<feature type="binding site" evidence="1">
    <location>
        <position position="81"/>
    </location>
    <ligand>
        <name>dimethylallyl diphosphate</name>
        <dbReference type="ChEBI" id="CHEBI:57623"/>
    </ligand>
</feature>
<feature type="binding site" evidence="1">
    <location>
        <position position="81"/>
    </location>
    <ligand>
        <name>isopentenyl diphosphate</name>
        <dbReference type="ChEBI" id="CHEBI:128769"/>
    </ligand>
</feature>
<feature type="binding site" evidence="1">
    <location>
        <position position="103"/>
    </location>
    <ligand>
        <name>[4Fe-4S] cluster</name>
        <dbReference type="ChEBI" id="CHEBI:49883"/>
    </ligand>
</feature>
<feature type="binding site" evidence="1">
    <location>
        <position position="131"/>
    </location>
    <ligand>
        <name>(2E)-4-hydroxy-3-methylbut-2-enyl diphosphate</name>
        <dbReference type="ChEBI" id="CHEBI:128753"/>
    </ligand>
</feature>
<feature type="binding site" evidence="1">
    <location>
        <position position="131"/>
    </location>
    <ligand>
        <name>dimethylallyl diphosphate</name>
        <dbReference type="ChEBI" id="CHEBI:57623"/>
    </ligand>
</feature>
<feature type="binding site" evidence="1">
    <location>
        <position position="131"/>
    </location>
    <ligand>
        <name>isopentenyl diphosphate</name>
        <dbReference type="ChEBI" id="CHEBI:128769"/>
    </ligand>
</feature>
<feature type="binding site" evidence="1">
    <location>
        <position position="170"/>
    </location>
    <ligand>
        <name>(2E)-4-hydroxy-3-methylbut-2-enyl diphosphate</name>
        <dbReference type="ChEBI" id="CHEBI:128753"/>
    </ligand>
</feature>
<feature type="binding site" evidence="1">
    <location>
        <position position="198"/>
    </location>
    <ligand>
        <name>[4Fe-4S] cluster</name>
        <dbReference type="ChEBI" id="CHEBI:49883"/>
    </ligand>
</feature>
<feature type="binding site" evidence="1">
    <location>
        <position position="226"/>
    </location>
    <ligand>
        <name>(2E)-4-hydroxy-3-methylbut-2-enyl diphosphate</name>
        <dbReference type="ChEBI" id="CHEBI:128753"/>
    </ligand>
</feature>
<feature type="binding site" evidence="1">
    <location>
        <position position="226"/>
    </location>
    <ligand>
        <name>dimethylallyl diphosphate</name>
        <dbReference type="ChEBI" id="CHEBI:57623"/>
    </ligand>
</feature>
<feature type="binding site" evidence="1">
    <location>
        <position position="226"/>
    </location>
    <ligand>
        <name>isopentenyl diphosphate</name>
        <dbReference type="ChEBI" id="CHEBI:128769"/>
    </ligand>
</feature>
<feature type="binding site" evidence="1">
    <location>
        <position position="228"/>
    </location>
    <ligand>
        <name>(2E)-4-hydroxy-3-methylbut-2-enyl diphosphate</name>
        <dbReference type="ChEBI" id="CHEBI:128753"/>
    </ligand>
</feature>
<feature type="binding site" evidence="1">
    <location>
        <position position="228"/>
    </location>
    <ligand>
        <name>dimethylallyl diphosphate</name>
        <dbReference type="ChEBI" id="CHEBI:57623"/>
    </ligand>
</feature>
<feature type="binding site" evidence="1">
    <location>
        <position position="228"/>
    </location>
    <ligand>
        <name>isopentenyl diphosphate</name>
        <dbReference type="ChEBI" id="CHEBI:128769"/>
    </ligand>
</feature>
<feature type="binding site" evidence="1">
    <location>
        <position position="271"/>
    </location>
    <ligand>
        <name>(2E)-4-hydroxy-3-methylbut-2-enyl diphosphate</name>
        <dbReference type="ChEBI" id="CHEBI:128753"/>
    </ligand>
</feature>
<feature type="binding site" evidence="1">
    <location>
        <position position="271"/>
    </location>
    <ligand>
        <name>dimethylallyl diphosphate</name>
        <dbReference type="ChEBI" id="CHEBI:57623"/>
    </ligand>
</feature>
<feature type="binding site" evidence="1">
    <location>
        <position position="271"/>
    </location>
    <ligand>
        <name>isopentenyl diphosphate</name>
        <dbReference type="ChEBI" id="CHEBI:128769"/>
    </ligand>
</feature>
<sequence length="316" mass="34967">MKIVKISPRGYCYGVVDAMVIARNAALDTSLPRPIYILGMIVHNKHVTDAFEEDGIITLDGPSRLDILDKIDSGTVIFTAHGVSPEVKQRAKEKGLTTIDATCPDVTKTHDLIEAKKAEGYHVIYIGKKNHPEPEGAVGIAPDIVHLIERADDLKTLEIPTDKILVTNQTTMSQWDVQHLMEDIQKKFPTAEFHKEICLATQVRQEAVAKQADVADLTIVVGDPKSNNSNRLAQVSQEIAGTKAYRVADVSEIKLEWLQGVENVAVTAGASTPTPITKEVIAFLEQYDPMNPATWERVRKVPLQKILPRVKVKKEQ</sequence>